<feature type="chain" id="PRO_0000408178" description="Triplex capsid protein 2">
    <location>
        <begin position="1"/>
        <end position="292"/>
    </location>
</feature>
<comment type="function">
    <text evidence="1">Structural component of the T=16 icosahedral capsid. The capsid is composed of pentamers and hexamers of major capsid protein/MCP, which are linked together by heterotrimers called triplexes. These triplexes are formed by a single molecule of triplex protein 1/TRX1 and two copies of triplex protein 2/TRX2. Additionally, TRX1 is required for efficient transport of TRX2 to the nucleus, which is the site of capsid assembly.</text>
</comment>
<comment type="subunit">
    <text evidence="1">Interacts with TRX1 and major capisd protein/MCP.</text>
</comment>
<comment type="subcellular location">
    <subcellularLocation>
        <location evidence="1">Virion</location>
    </subcellularLocation>
    <subcellularLocation>
        <location evidence="1">Host nucleus</location>
    </subcellularLocation>
</comment>
<comment type="similarity">
    <text evidence="1">Belongs to the herpesviridae TRX2 protein family.</text>
</comment>
<keyword id="KW-0167">Capsid protein</keyword>
<keyword id="KW-1048">Host nucleus</keyword>
<keyword id="KW-0946">Virion</keyword>
<accession>Q18LE1</accession>
<proteinExistence type="inferred from homology"/>
<organismHost>
    <name type="scientific">Elephas maximus</name>
    <name type="common">Indian elephant</name>
    <dbReference type="NCBI Taxonomy" id="9783"/>
</organismHost>
<organismHost>
    <name type="scientific">Loxodonta africana</name>
    <name type="common">African elephant</name>
    <dbReference type="NCBI Taxonomy" id="9785"/>
</organismHost>
<organismHost>
    <name type="scientific">Loxodonta cyclotis</name>
    <name type="common">African forest elephant</name>
    <dbReference type="NCBI Taxonomy" id="99490"/>
</organismHost>
<evidence type="ECO:0000255" key="1">
    <source>
        <dbReference type="HAMAP-Rule" id="MF_04019"/>
    </source>
</evidence>
<reference key="1">
    <citation type="journal article" date="2007" name="J. Virol.">
        <title>Identification of novel rodent herpesviruses, including the first gammaherpesvirus of Mus musculus.</title>
        <authorList>
            <person name="Ehlers B."/>
            <person name="Kuchler J."/>
            <person name="Yasmum N."/>
            <person name="Dural G."/>
            <person name="Voigt S."/>
            <person name="Schmidt-Chanasit J."/>
            <person name="Jakel T."/>
            <person name="Matuschka F.R."/>
            <person name="Richter D."/>
            <person name="Essbauer S."/>
            <person name="Hughes D.J."/>
            <person name="Summers C."/>
            <person name="Bennett M."/>
            <person name="Stewart J.P."/>
            <person name="Ulrich R.G."/>
        </authorList>
    </citation>
    <scope>NUCLEOTIDE SEQUENCE [GENOMIC DNA]</scope>
</reference>
<reference key="2">
    <citation type="journal article" date="2001" name="J. Gen. Virol.">
        <title>Genetic and ultrastructural characterization of a European isolate of the fatal endotheliotropic elephant herpesvirus.</title>
        <authorList>
            <person name="Ehlers B."/>
            <person name="Burkhardt S."/>
            <person name="Goltz M."/>
            <person name="Bergmann V."/>
            <person name="Ochs A."/>
            <person name="Weiler H."/>
            <person name="Hentschke J."/>
        </authorList>
    </citation>
    <scope>NUCLEOTIDE SEQUENCE [GENOMIC DNA]</scope>
</reference>
<protein>
    <recommendedName>
        <fullName evidence="1">Triplex capsid protein 2</fullName>
    </recommendedName>
</protein>
<name>TRX2_ELHVK</name>
<gene>
    <name evidence="1" type="primary">TRX2</name>
</gene>
<dbReference type="EMBL" id="AF322977">
    <property type="protein sequence ID" value="ABG36578.1"/>
    <property type="molecule type" value="Genomic_DNA"/>
</dbReference>
<dbReference type="SMR" id="Q18LE1"/>
<dbReference type="IntAct" id="Q18LE1">
    <property type="interactions" value="1"/>
</dbReference>
<dbReference type="MINT" id="Q18LE1"/>
<dbReference type="GO" id="GO:0042025">
    <property type="term" value="C:host cell nucleus"/>
    <property type="evidence" value="ECO:0007669"/>
    <property type="project" value="UniProtKB-SubCell"/>
</dbReference>
<dbReference type="GO" id="GO:0019028">
    <property type="term" value="C:viral capsid"/>
    <property type="evidence" value="ECO:0007669"/>
    <property type="project" value="UniProtKB-KW"/>
</dbReference>
<dbReference type="GO" id="GO:0005198">
    <property type="term" value="F:structural molecule activity"/>
    <property type="evidence" value="ECO:0007669"/>
    <property type="project" value="InterPro"/>
</dbReference>
<dbReference type="HAMAP" id="MF_04019">
    <property type="entry name" value="HSV_TRX2"/>
    <property type="match status" value="1"/>
</dbReference>
<dbReference type="InterPro" id="IPR002690">
    <property type="entry name" value="Herpes_capsid_2"/>
</dbReference>
<dbReference type="Pfam" id="PF01802">
    <property type="entry name" value="Herpes_V23"/>
    <property type="match status" value="1"/>
</dbReference>
<organism>
    <name type="scientific">Elephantid herpesvirus 1 (isolate Asian elephant/Berlin/Kiba/1998)</name>
    <name type="common">EIHV-1</name>
    <name type="synonym">Elephant endotheliotropic herpesvirus</name>
    <dbReference type="NCBI Taxonomy" id="654902"/>
    <lineage>
        <taxon>Viruses</taxon>
        <taxon>Duplodnaviria</taxon>
        <taxon>Heunggongvirae</taxon>
        <taxon>Peploviricota</taxon>
        <taxon>Herviviricetes</taxon>
        <taxon>Herpesvirales</taxon>
        <taxon>Orthoherpesviridae</taxon>
        <taxon>Betaherpesvirinae</taxon>
        <taxon>Proboscivirus</taxon>
        <taxon>Proboscivirus elephantidbeta1</taxon>
        <taxon>Elephantid herpesvirus 1</taxon>
    </lineage>
</organism>
<sequence>MNEVKCVFETKLSPGDVAKLNKIVGAVVPVARCTPLISPRDVGLHKHVSHRTDYGKLHMALNMMYPTVFRKLEGNQMVMTPMQHGNIYTIRNTGPFSWEVGDRLAIIPPVFSVEHTTIMQTPSWDLMLPIIVPVQVAKEINIRNLVLTLMSLNRPGRDVELSQEVRRIHFRDVTIDIPATLDTRQLNSVRNVCLALALITNVAPSLLQQYVPRLALAETDMLLVKCYDLLKKLDLPGDGNGGEPPNIPNEIQRMSGLLNLITYVSSIVTENSLFIVNDITPDNKMATCTFTL</sequence>